<protein>
    <recommendedName>
        <fullName evidence="1">2-succinyl-5-enolpyruvyl-6-hydroxy-3-cyclohexene-1-carboxylate synthase</fullName>
        <shortName evidence="1">SEPHCHC synthase</shortName>
        <ecNumber evidence="1">2.2.1.9</ecNumber>
    </recommendedName>
    <alternativeName>
        <fullName evidence="1">Menaquinone biosynthesis protein MenD</fullName>
    </alternativeName>
</protein>
<proteinExistence type="inferred from homology"/>
<gene>
    <name evidence="1" type="primary">menD</name>
    <name type="ordered locus">SAV1043</name>
</gene>
<sequence>MGNHKAALTKQVFTFASELYAYGVREVVISPGSRSTPLALAFEAHPNIKTWIHPDERSAAFFAVGLIKGSERPVAILCTSGTAAANYTPAIAESQISRIPLIVLTSDRPHELRSVGAPQAINQVNMFNNYVSYEFDMPIADDSKETINAIYYQMQIASQYLYGPHKGPIHFNLPFRDPLTPDLNATELLTSEMKILPHYQKSIDASALRHILNKKKGLIIVGDMQHQEVDQILTYSTIYDLPILADPLSHLRKFDHPNVICTYDLLFRSGLDLNVDFVIRVGKPVISKKLNQWLKKTDAFQILVQNNDKIDVFPIAPDISYEISANDFFRSLMEDTTINRVSWLEKWQCLEKKGRKEIKCYLEQATDESAFVGELIKKTSEKDALFISNSMPIRDVDNLLLNKNIDVYANRGANGIDGIVSTALGMAVHKRITLLIGDLSFYHDMNGLLMSKLNNIQMNIVLLNNDGGGIFSYLPQKESATDYFERLFGTPTGLDFEYTAKLYQFDFKRFNSVSEFKNATLLSETSTIYELITNREDNFKQHQILYQKLSEMIHDTL</sequence>
<organism>
    <name type="scientific">Staphylococcus aureus (strain Mu50 / ATCC 700699)</name>
    <dbReference type="NCBI Taxonomy" id="158878"/>
    <lineage>
        <taxon>Bacteria</taxon>
        <taxon>Bacillati</taxon>
        <taxon>Bacillota</taxon>
        <taxon>Bacilli</taxon>
        <taxon>Bacillales</taxon>
        <taxon>Staphylococcaceae</taxon>
        <taxon>Staphylococcus</taxon>
    </lineage>
</organism>
<keyword id="KW-0460">Magnesium</keyword>
<keyword id="KW-0464">Manganese</keyword>
<keyword id="KW-0474">Menaquinone biosynthesis</keyword>
<keyword id="KW-0479">Metal-binding</keyword>
<keyword id="KW-0786">Thiamine pyrophosphate</keyword>
<keyword id="KW-0808">Transferase</keyword>
<accession>Q99V50</accession>
<evidence type="ECO:0000255" key="1">
    <source>
        <dbReference type="HAMAP-Rule" id="MF_01659"/>
    </source>
</evidence>
<reference key="1">
    <citation type="journal article" date="2001" name="Lancet">
        <title>Whole genome sequencing of meticillin-resistant Staphylococcus aureus.</title>
        <authorList>
            <person name="Kuroda M."/>
            <person name="Ohta T."/>
            <person name="Uchiyama I."/>
            <person name="Baba T."/>
            <person name="Yuzawa H."/>
            <person name="Kobayashi I."/>
            <person name="Cui L."/>
            <person name="Oguchi A."/>
            <person name="Aoki K."/>
            <person name="Nagai Y."/>
            <person name="Lian J.-Q."/>
            <person name="Ito T."/>
            <person name="Kanamori M."/>
            <person name="Matsumaru H."/>
            <person name="Maruyama A."/>
            <person name="Murakami H."/>
            <person name="Hosoyama A."/>
            <person name="Mizutani-Ui Y."/>
            <person name="Takahashi N.K."/>
            <person name="Sawano T."/>
            <person name="Inoue R."/>
            <person name="Kaito C."/>
            <person name="Sekimizu K."/>
            <person name="Hirakawa H."/>
            <person name="Kuhara S."/>
            <person name="Goto S."/>
            <person name="Yabuzaki J."/>
            <person name="Kanehisa M."/>
            <person name="Yamashita A."/>
            <person name="Oshima K."/>
            <person name="Furuya K."/>
            <person name="Yoshino C."/>
            <person name="Shiba T."/>
            <person name="Hattori M."/>
            <person name="Ogasawara N."/>
            <person name="Hayashi H."/>
            <person name="Hiramatsu K."/>
        </authorList>
    </citation>
    <scope>NUCLEOTIDE SEQUENCE [LARGE SCALE GENOMIC DNA]</scope>
    <source>
        <strain>Mu50 / ATCC 700699</strain>
    </source>
</reference>
<comment type="function">
    <text evidence="1">Catalyzes the thiamine diphosphate-dependent decarboxylation of 2-oxoglutarate and the subsequent addition of the resulting succinic semialdehyde-thiamine pyrophosphate anion to isochorismate to yield 2-succinyl-5-enolpyruvyl-6-hydroxy-3-cyclohexene-1-carboxylate (SEPHCHC).</text>
</comment>
<comment type="catalytic activity">
    <reaction evidence="1">
        <text>isochorismate + 2-oxoglutarate + H(+) = 5-enolpyruvoyl-6-hydroxy-2-succinyl-cyclohex-3-ene-1-carboxylate + CO2</text>
        <dbReference type="Rhea" id="RHEA:25593"/>
        <dbReference type="ChEBI" id="CHEBI:15378"/>
        <dbReference type="ChEBI" id="CHEBI:16526"/>
        <dbReference type="ChEBI" id="CHEBI:16810"/>
        <dbReference type="ChEBI" id="CHEBI:29780"/>
        <dbReference type="ChEBI" id="CHEBI:58818"/>
        <dbReference type="EC" id="2.2.1.9"/>
    </reaction>
</comment>
<comment type="cofactor">
    <cofactor evidence="1">
        <name>Mg(2+)</name>
        <dbReference type="ChEBI" id="CHEBI:18420"/>
    </cofactor>
    <cofactor evidence="1">
        <name>Mn(2+)</name>
        <dbReference type="ChEBI" id="CHEBI:29035"/>
    </cofactor>
</comment>
<comment type="cofactor">
    <cofactor evidence="1">
        <name>thiamine diphosphate</name>
        <dbReference type="ChEBI" id="CHEBI:58937"/>
    </cofactor>
    <text evidence="1">Binds 1 thiamine pyrophosphate per subunit.</text>
</comment>
<comment type="pathway">
    <text evidence="1">Quinol/quinone metabolism; 1,4-dihydroxy-2-naphthoate biosynthesis; 1,4-dihydroxy-2-naphthoate from chorismate: step 2/7.</text>
</comment>
<comment type="pathway">
    <text evidence="1">Quinol/quinone metabolism; menaquinone biosynthesis.</text>
</comment>
<comment type="subunit">
    <text evidence="1">Homodimer.</text>
</comment>
<comment type="similarity">
    <text evidence="1">Belongs to the TPP enzyme family. MenD subfamily.</text>
</comment>
<feature type="chain" id="PRO_0000341856" description="2-succinyl-5-enolpyruvyl-6-hydroxy-3-cyclohexene-1-carboxylate synthase">
    <location>
        <begin position="1"/>
        <end position="557"/>
    </location>
</feature>
<name>MEND_STAAM</name>
<dbReference type="EC" id="2.2.1.9" evidence="1"/>
<dbReference type="EMBL" id="BA000017">
    <property type="protein sequence ID" value="BAB57205.1"/>
    <property type="molecule type" value="Genomic_DNA"/>
</dbReference>
<dbReference type="RefSeq" id="WP_000526694.1">
    <property type="nucleotide sequence ID" value="NC_002758.2"/>
</dbReference>
<dbReference type="SMR" id="Q99V50"/>
<dbReference type="DNASU" id="1121020"/>
<dbReference type="KEGG" id="sav:SAV1043"/>
<dbReference type="HOGENOM" id="CLU_006051_3_0_9"/>
<dbReference type="PhylomeDB" id="Q99V50"/>
<dbReference type="UniPathway" id="UPA00079"/>
<dbReference type="UniPathway" id="UPA01057">
    <property type="reaction ID" value="UER00164"/>
</dbReference>
<dbReference type="Proteomes" id="UP000002481">
    <property type="component" value="Chromosome"/>
</dbReference>
<dbReference type="GO" id="GO:0070204">
    <property type="term" value="F:2-succinyl-5-enolpyruvyl-6-hydroxy-3-cyclohexene-1-carboxylic-acid synthase activity"/>
    <property type="evidence" value="ECO:0007669"/>
    <property type="project" value="UniProtKB-UniRule"/>
</dbReference>
<dbReference type="GO" id="GO:0000287">
    <property type="term" value="F:magnesium ion binding"/>
    <property type="evidence" value="ECO:0007669"/>
    <property type="project" value="UniProtKB-UniRule"/>
</dbReference>
<dbReference type="GO" id="GO:0030145">
    <property type="term" value="F:manganese ion binding"/>
    <property type="evidence" value="ECO:0007669"/>
    <property type="project" value="UniProtKB-UniRule"/>
</dbReference>
<dbReference type="GO" id="GO:0030976">
    <property type="term" value="F:thiamine pyrophosphate binding"/>
    <property type="evidence" value="ECO:0007669"/>
    <property type="project" value="UniProtKB-UniRule"/>
</dbReference>
<dbReference type="GO" id="GO:0009234">
    <property type="term" value="P:menaquinone biosynthetic process"/>
    <property type="evidence" value="ECO:0007669"/>
    <property type="project" value="UniProtKB-UniRule"/>
</dbReference>
<dbReference type="CDD" id="cd07037">
    <property type="entry name" value="TPP_PYR_MenD"/>
    <property type="match status" value="1"/>
</dbReference>
<dbReference type="CDD" id="cd02009">
    <property type="entry name" value="TPP_SHCHC_synthase"/>
    <property type="match status" value="1"/>
</dbReference>
<dbReference type="Gene3D" id="3.40.50.970">
    <property type="match status" value="2"/>
</dbReference>
<dbReference type="Gene3D" id="3.40.50.1220">
    <property type="entry name" value="TPP-binding domain"/>
    <property type="match status" value="1"/>
</dbReference>
<dbReference type="HAMAP" id="MF_01659">
    <property type="entry name" value="MenD"/>
    <property type="match status" value="1"/>
</dbReference>
<dbReference type="InterPro" id="IPR004433">
    <property type="entry name" value="MenaQ_synth_MenD"/>
</dbReference>
<dbReference type="InterPro" id="IPR032264">
    <property type="entry name" value="MenD_middle"/>
</dbReference>
<dbReference type="InterPro" id="IPR029061">
    <property type="entry name" value="THDP-binding"/>
</dbReference>
<dbReference type="InterPro" id="IPR012001">
    <property type="entry name" value="Thiamin_PyroP_enz_TPP-bd_dom"/>
</dbReference>
<dbReference type="InterPro" id="IPR011766">
    <property type="entry name" value="TPP_enzyme_TPP-bd"/>
</dbReference>
<dbReference type="NCBIfam" id="TIGR00173">
    <property type="entry name" value="menD"/>
    <property type="match status" value="1"/>
</dbReference>
<dbReference type="PANTHER" id="PTHR42916">
    <property type="entry name" value="2-SUCCINYL-5-ENOLPYRUVYL-6-HYDROXY-3-CYCLOHEXENE-1-CARBOXYLATE SYNTHASE"/>
    <property type="match status" value="1"/>
</dbReference>
<dbReference type="PANTHER" id="PTHR42916:SF1">
    <property type="entry name" value="PROTEIN PHYLLO, CHLOROPLASTIC"/>
    <property type="match status" value="1"/>
</dbReference>
<dbReference type="Pfam" id="PF02775">
    <property type="entry name" value="TPP_enzyme_C"/>
    <property type="match status" value="1"/>
</dbReference>
<dbReference type="Pfam" id="PF16582">
    <property type="entry name" value="TPP_enzyme_M_2"/>
    <property type="match status" value="1"/>
</dbReference>
<dbReference type="Pfam" id="PF02776">
    <property type="entry name" value="TPP_enzyme_N"/>
    <property type="match status" value="1"/>
</dbReference>
<dbReference type="PIRSF" id="PIRSF004983">
    <property type="entry name" value="MenD"/>
    <property type="match status" value="1"/>
</dbReference>
<dbReference type="SUPFAM" id="SSF52518">
    <property type="entry name" value="Thiamin diphosphate-binding fold (THDP-binding)"/>
    <property type="match status" value="2"/>
</dbReference>